<proteinExistence type="inferred from homology"/>
<sequence>MKPPIFIIIMTTVISGTMMVLISSHWLLIWIGFEMNMLAIIPILMKKFNPRAMEASTKYFLTQATASMILMLGIIINLLYSGQWTMLHTPNPMASNMMTIALTMKLGLSPFHFWVPEVTQGISLSSGMILLTWQKIAPLSVLYQMAPSINPNLLMSMAIMSMLVAGWGGLNQTQLRKILAYSSIGHMGWMTSITVYNPTLMHLNLVMYIMMTLGTFMLFMYNSSLTTLSLSYSWNKFPLTTLLILMLMLSLGGLPPLSGFIPKWMIIQELTKNNMIIIPTFMAIAALLSLYFYMRLTYTTALTMFPSMNNMKMKWQFENTKKITLLPPLIIMSTMLLPMTPMMLILY</sequence>
<evidence type="ECO:0000250" key="1">
    <source>
        <dbReference type="UniProtKB" id="P03891"/>
    </source>
</evidence>
<evidence type="ECO:0000250" key="2">
    <source>
        <dbReference type="UniProtKB" id="P03892"/>
    </source>
</evidence>
<evidence type="ECO:0000255" key="3"/>
<evidence type="ECO:0000305" key="4"/>
<name>NU2M_AILFU</name>
<organism>
    <name type="scientific">Ailurus fulgens</name>
    <name type="common">Himalayan red panda</name>
    <dbReference type="NCBI Taxonomy" id="9649"/>
    <lineage>
        <taxon>Eukaryota</taxon>
        <taxon>Metazoa</taxon>
        <taxon>Chordata</taxon>
        <taxon>Craniata</taxon>
        <taxon>Vertebrata</taxon>
        <taxon>Euteleostomi</taxon>
        <taxon>Mammalia</taxon>
        <taxon>Eutheria</taxon>
        <taxon>Laurasiatheria</taxon>
        <taxon>Carnivora</taxon>
        <taxon>Caniformia</taxon>
        <taxon>Musteloidea</taxon>
        <taxon>Ailuridae</taxon>
        <taxon>Ailurus</taxon>
    </lineage>
</organism>
<gene>
    <name evidence="1" type="primary">MT-ND2</name>
    <name type="synonym">MTND2</name>
    <name type="synonym">NADH2</name>
    <name type="synonym">ND2</name>
</gene>
<protein>
    <recommendedName>
        <fullName evidence="1">NADH-ubiquinone oxidoreductase chain 2</fullName>
        <ecNumber evidence="1">7.1.1.2</ecNumber>
    </recommendedName>
    <alternativeName>
        <fullName>NADH dehydrogenase subunit 2</fullName>
    </alternativeName>
</protein>
<accession>Q534E0</accession>
<comment type="function">
    <text evidence="1">Core subunit of the mitochondrial membrane respiratory chain NADH dehydrogenase (Complex I) which catalyzes electron transfer from NADH through the respiratory chain, using ubiquinone as an electron acceptor. Essential for the catalytic activity and assembly of complex I.</text>
</comment>
<comment type="catalytic activity">
    <reaction evidence="1">
        <text>a ubiquinone + NADH + 5 H(+)(in) = a ubiquinol + NAD(+) + 4 H(+)(out)</text>
        <dbReference type="Rhea" id="RHEA:29091"/>
        <dbReference type="Rhea" id="RHEA-COMP:9565"/>
        <dbReference type="Rhea" id="RHEA-COMP:9566"/>
        <dbReference type="ChEBI" id="CHEBI:15378"/>
        <dbReference type="ChEBI" id="CHEBI:16389"/>
        <dbReference type="ChEBI" id="CHEBI:17976"/>
        <dbReference type="ChEBI" id="CHEBI:57540"/>
        <dbReference type="ChEBI" id="CHEBI:57945"/>
        <dbReference type="EC" id="7.1.1.2"/>
    </reaction>
</comment>
<comment type="subunit">
    <text evidence="1 2">Core subunit of respiratory chain NADH dehydrogenase (Complex I) which is composed of 45 different subunits. Interacts with TMEM242 (By similarity).</text>
</comment>
<comment type="subcellular location">
    <subcellularLocation>
        <location evidence="2">Mitochondrion inner membrane</location>
        <topology evidence="3">Multi-pass membrane protein</topology>
    </subcellularLocation>
</comment>
<comment type="similarity">
    <text evidence="4">Belongs to the complex I subunit 2 family.</text>
</comment>
<feature type="chain" id="PRO_0000117538" description="NADH-ubiquinone oxidoreductase chain 2">
    <location>
        <begin position="1"/>
        <end position="347"/>
    </location>
</feature>
<feature type="transmembrane region" description="Helical" evidence="3">
    <location>
        <begin position="3"/>
        <end position="23"/>
    </location>
</feature>
<feature type="transmembrane region" description="Helical" evidence="3">
    <location>
        <begin position="25"/>
        <end position="45"/>
    </location>
</feature>
<feature type="transmembrane region" description="Helical" evidence="3">
    <location>
        <begin position="59"/>
        <end position="79"/>
    </location>
</feature>
<feature type="transmembrane region" description="Helical" evidence="3">
    <location>
        <begin position="111"/>
        <end position="131"/>
    </location>
</feature>
<feature type="transmembrane region" description="Helical" evidence="3">
    <location>
        <begin position="149"/>
        <end position="169"/>
    </location>
</feature>
<feature type="transmembrane region" description="Helical" evidence="3">
    <location>
        <begin position="200"/>
        <end position="220"/>
    </location>
</feature>
<feature type="transmembrane region" description="Helical" evidence="3">
    <location>
        <begin position="242"/>
        <end position="262"/>
    </location>
</feature>
<feature type="transmembrane region" description="Helical" evidence="3">
    <location>
        <begin position="274"/>
        <end position="294"/>
    </location>
</feature>
<feature type="transmembrane region" description="Helical" evidence="3">
    <location>
        <begin position="325"/>
        <end position="345"/>
    </location>
</feature>
<dbReference type="EC" id="7.1.1.2" evidence="1"/>
<dbReference type="EMBL" id="AY750613">
    <property type="protein sequence ID" value="AAW83837.1"/>
    <property type="molecule type" value="Genomic_DNA"/>
</dbReference>
<dbReference type="RefSeq" id="YP_002120634.1">
    <property type="nucleotide sequence ID" value="NC_011124.1"/>
</dbReference>
<dbReference type="SMR" id="Q534E0"/>
<dbReference type="GeneID" id="6741543"/>
<dbReference type="CTD" id="4536"/>
<dbReference type="GO" id="GO:0005743">
    <property type="term" value="C:mitochondrial inner membrane"/>
    <property type="evidence" value="ECO:0000250"/>
    <property type="project" value="UniProtKB"/>
</dbReference>
<dbReference type="GO" id="GO:0008137">
    <property type="term" value="F:NADH dehydrogenase (ubiquinone) activity"/>
    <property type="evidence" value="ECO:0000250"/>
    <property type="project" value="UniProtKB"/>
</dbReference>
<dbReference type="GO" id="GO:0006120">
    <property type="term" value="P:mitochondrial electron transport, NADH to ubiquinone"/>
    <property type="evidence" value="ECO:0000250"/>
    <property type="project" value="UniProtKB"/>
</dbReference>
<dbReference type="GO" id="GO:0032981">
    <property type="term" value="P:mitochondrial respiratory chain complex I assembly"/>
    <property type="evidence" value="ECO:0000250"/>
    <property type="project" value="UniProtKB"/>
</dbReference>
<dbReference type="InterPro" id="IPR050175">
    <property type="entry name" value="Complex_I_Subunit_2"/>
</dbReference>
<dbReference type="InterPro" id="IPR010933">
    <property type="entry name" value="NADH_DH_su2_C"/>
</dbReference>
<dbReference type="InterPro" id="IPR003917">
    <property type="entry name" value="NADH_UbQ_OxRdtase_chain2"/>
</dbReference>
<dbReference type="InterPro" id="IPR001750">
    <property type="entry name" value="ND/Mrp_TM"/>
</dbReference>
<dbReference type="PANTHER" id="PTHR46552">
    <property type="entry name" value="NADH-UBIQUINONE OXIDOREDUCTASE CHAIN 2"/>
    <property type="match status" value="1"/>
</dbReference>
<dbReference type="PANTHER" id="PTHR46552:SF1">
    <property type="entry name" value="NADH-UBIQUINONE OXIDOREDUCTASE CHAIN 2"/>
    <property type="match status" value="1"/>
</dbReference>
<dbReference type="Pfam" id="PF06444">
    <property type="entry name" value="NADH_dehy_S2_C"/>
    <property type="match status" value="1"/>
</dbReference>
<dbReference type="Pfam" id="PF00361">
    <property type="entry name" value="Proton_antipo_M"/>
    <property type="match status" value="1"/>
</dbReference>
<dbReference type="PRINTS" id="PR01436">
    <property type="entry name" value="NADHDHGNASE2"/>
</dbReference>
<reference key="1">
    <citation type="journal article" date="2005" name="Syst. Biol.">
        <title>Molecular phylogeny of the Carnivora (Mammalia): assessing the impact of increased sampling on resolving enigmatic relationships.</title>
        <authorList>
            <person name="Flynn J.J."/>
            <person name="Finarelli J.A."/>
            <person name="Zehr S."/>
            <person name="Hsu J."/>
            <person name="Nedbal M.A."/>
        </authorList>
    </citation>
    <scope>NUCLEOTIDE SEQUENCE [GENOMIC DNA]</scope>
</reference>
<keyword id="KW-0249">Electron transport</keyword>
<keyword id="KW-0472">Membrane</keyword>
<keyword id="KW-0496">Mitochondrion</keyword>
<keyword id="KW-0999">Mitochondrion inner membrane</keyword>
<keyword id="KW-0520">NAD</keyword>
<keyword id="KW-0679">Respiratory chain</keyword>
<keyword id="KW-1278">Translocase</keyword>
<keyword id="KW-0812">Transmembrane</keyword>
<keyword id="KW-1133">Transmembrane helix</keyword>
<keyword id="KW-0813">Transport</keyword>
<keyword id="KW-0830">Ubiquinone</keyword>
<geneLocation type="mitochondrion"/>